<dbReference type="EC" id="3.1.1.61" evidence="1"/>
<dbReference type="EC" id="3.5.1.44" evidence="1"/>
<dbReference type="EMBL" id="BX640444">
    <property type="protein sequence ID" value="CAE33044.1"/>
    <property type="molecule type" value="Genomic_DNA"/>
</dbReference>
<dbReference type="RefSeq" id="WP_003811913.1">
    <property type="nucleotide sequence ID" value="NC_002927.3"/>
</dbReference>
<dbReference type="SMR" id="Q7WJE7"/>
<dbReference type="KEGG" id="bbr:BB2550"/>
<dbReference type="eggNOG" id="COG2201">
    <property type="taxonomic scope" value="Bacteria"/>
</dbReference>
<dbReference type="HOGENOM" id="CLU_000445_51_0_4"/>
<dbReference type="Proteomes" id="UP000001027">
    <property type="component" value="Chromosome"/>
</dbReference>
<dbReference type="GO" id="GO:0005737">
    <property type="term" value="C:cytoplasm"/>
    <property type="evidence" value="ECO:0007669"/>
    <property type="project" value="UniProtKB-SubCell"/>
</dbReference>
<dbReference type="GO" id="GO:0000156">
    <property type="term" value="F:phosphorelay response regulator activity"/>
    <property type="evidence" value="ECO:0007669"/>
    <property type="project" value="InterPro"/>
</dbReference>
<dbReference type="GO" id="GO:0008984">
    <property type="term" value="F:protein-glutamate methylesterase activity"/>
    <property type="evidence" value="ECO:0007669"/>
    <property type="project" value="UniProtKB-UniRule"/>
</dbReference>
<dbReference type="GO" id="GO:0050568">
    <property type="term" value="F:protein-glutamine glutaminase activity"/>
    <property type="evidence" value="ECO:0007669"/>
    <property type="project" value="UniProtKB-UniRule"/>
</dbReference>
<dbReference type="GO" id="GO:0006935">
    <property type="term" value="P:chemotaxis"/>
    <property type="evidence" value="ECO:0007669"/>
    <property type="project" value="UniProtKB-UniRule"/>
</dbReference>
<dbReference type="CDD" id="cd16432">
    <property type="entry name" value="CheB_Rec"/>
    <property type="match status" value="1"/>
</dbReference>
<dbReference type="CDD" id="cd17541">
    <property type="entry name" value="REC_CheB-like"/>
    <property type="match status" value="1"/>
</dbReference>
<dbReference type="FunFam" id="3.40.50.180:FF:000001">
    <property type="entry name" value="Protein-glutamate methylesterase/protein-glutamine glutaminase"/>
    <property type="match status" value="1"/>
</dbReference>
<dbReference type="FunFam" id="3.40.50.2300:FF:000060">
    <property type="entry name" value="Protein-glutamate methylesterase/protein-glutamine glutaminase"/>
    <property type="match status" value="1"/>
</dbReference>
<dbReference type="Gene3D" id="3.40.50.2300">
    <property type="match status" value="1"/>
</dbReference>
<dbReference type="Gene3D" id="3.40.50.180">
    <property type="entry name" value="Methylesterase CheB, C-terminal domain"/>
    <property type="match status" value="1"/>
</dbReference>
<dbReference type="HAMAP" id="MF_00099">
    <property type="entry name" value="CheB_chemtxs"/>
    <property type="match status" value="1"/>
</dbReference>
<dbReference type="InterPro" id="IPR008248">
    <property type="entry name" value="CheB-like"/>
</dbReference>
<dbReference type="InterPro" id="IPR035909">
    <property type="entry name" value="CheB_C"/>
</dbReference>
<dbReference type="InterPro" id="IPR011006">
    <property type="entry name" value="CheY-like_superfamily"/>
</dbReference>
<dbReference type="InterPro" id="IPR000673">
    <property type="entry name" value="Sig_transdc_resp-reg_Me-estase"/>
</dbReference>
<dbReference type="InterPro" id="IPR001789">
    <property type="entry name" value="Sig_transdc_resp-reg_receiver"/>
</dbReference>
<dbReference type="NCBIfam" id="NF001965">
    <property type="entry name" value="PRK00742.1"/>
    <property type="match status" value="1"/>
</dbReference>
<dbReference type="NCBIfam" id="NF009206">
    <property type="entry name" value="PRK12555.1"/>
    <property type="match status" value="1"/>
</dbReference>
<dbReference type="PANTHER" id="PTHR42872">
    <property type="entry name" value="PROTEIN-GLUTAMATE METHYLESTERASE/PROTEIN-GLUTAMINE GLUTAMINASE"/>
    <property type="match status" value="1"/>
</dbReference>
<dbReference type="PANTHER" id="PTHR42872:SF6">
    <property type="entry name" value="PROTEIN-GLUTAMATE METHYLESTERASE_PROTEIN-GLUTAMINE GLUTAMINASE"/>
    <property type="match status" value="1"/>
</dbReference>
<dbReference type="Pfam" id="PF01339">
    <property type="entry name" value="CheB_methylest"/>
    <property type="match status" value="1"/>
</dbReference>
<dbReference type="Pfam" id="PF00072">
    <property type="entry name" value="Response_reg"/>
    <property type="match status" value="1"/>
</dbReference>
<dbReference type="PIRSF" id="PIRSF000876">
    <property type="entry name" value="RR_chemtxs_CheB"/>
    <property type="match status" value="1"/>
</dbReference>
<dbReference type="SMART" id="SM00448">
    <property type="entry name" value="REC"/>
    <property type="match status" value="1"/>
</dbReference>
<dbReference type="SUPFAM" id="SSF52172">
    <property type="entry name" value="CheY-like"/>
    <property type="match status" value="1"/>
</dbReference>
<dbReference type="SUPFAM" id="SSF52738">
    <property type="entry name" value="Methylesterase CheB, C-terminal domain"/>
    <property type="match status" value="1"/>
</dbReference>
<dbReference type="PROSITE" id="PS50122">
    <property type="entry name" value="CHEB"/>
    <property type="match status" value="1"/>
</dbReference>
<dbReference type="PROSITE" id="PS50110">
    <property type="entry name" value="RESPONSE_REGULATORY"/>
    <property type="match status" value="1"/>
</dbReference>
<reference key="1">
    <citation type="journal article" date="2003" name="Nat. Genet.">
        <title>Comparative analysis of the genome sequences of Bordetella pertussis, Bordetella parapertussis and Bordetella bronchiseptica.</title>
        <authorList>
            <person name="Parkhill J."/>
            <person name="Sebaihia M."/>
            <person name="Preston A."/>
            <person name="Murphy L.D."/>
            <person name="Thomson N.R."/>
            <person name="Harris D.E."/>
            <person name="Holden M.T.G."/>
            <person name="Churcher C.M."/>
            <person name="Bentley S.D."/>
            <person name="Mungall K.L."/>
            <person name="Cerdeno-Tarraga A.-M."/>
            <person name="Temple L."/>
            <person name="James K.D."/>
            <person name="Harris B."/>
            <person name="Quail M.A."/>
            <person name="Achtman M."/>
            <person name="Atkin R."/>
            <person name="Baker S."/>
            <person name="Basham D."/>
            <person name="Bason N."/>
            <person name="Cherevach I."/>
            <person name="Chillingworth T."/>
            <person name="Collins M."/>
            <person name="Cronin A."/>
            <person name="Davis P."/>
            <person name="Doggett J."/>
            <person name="Feltwell T."/>
            <person name="Goble A."/>
            <person name="Hamlin N."/>
            <person name="Hauser H."/>
            <person name="Holroyd S."/>
            <person name="Jagels K."/>
            <person name="Leather S."/>
            <person name="Moule S."/>
            <person name="Norberczak H."/>
            <person name="O'Neil S."/>
            <person name="Ormond D."/>
            <person name="Price C."/>
            <person name="Rabbinowitsch E."/>
            <person name="Rutter S."/>
            <person name="Sanders M."/>
            <person name="Saunders D."/>
            <person name="Seeger K."/>
            <person name="Sharp S."/>
            <person name="Simmonds M."/>
            <person name="Skelton J."/>
            <person name="Squares R."/>
            <person name="Squares S."/>
            <person name="Stevens K."/>
            <person name="Unwin L."/>
            <person name="Whitehead S."/>
            <person name="Barrell B.G."/>
            <person name="Maskell D.J."/>
        </authorList>
    </citation>
    <scope>NUCLEOTIDE SEQUENCE [LARGE SCALE GENOMIC DNA]</scope>
    <source>
        <strain>ATCC BAA-588 / NCTC 13252 / RB50</strain>
    </source>
</reference>
<proteinExistence type="inferred from homology"/>
<comment type="function">
    <text evidence="1">Involved in chemotaxis. Part of a chemotaxis signal transduction system that modulates chemotaxis in response to various stimuli. Catalyzes the demethylation of specific methylglutamate residues introduced into the chemoreceptors (methyl-accepting chemotaxis proteins or MCP) by CheR. Also mediates the irreversible deamidation of specific glutamine residues to glutamic acid.</text>
</comment>
<comment type="catalytic activity">
    <reaction evidence="1">
        <text>[protein]-L-glutamate 5-O-methyl ester + H2O = L-glutamyl-[protein] + methanol + H(+)</text>
        <dbReference type="Rhea" id="RHEA:23236"/>
        <dbReference type="Rhea" id="RHEA-COMP:10208"/>
        <dbReference type="Rhea" id="RHEA-COMP:10311"/>
        <dbReference type="ChEBI" id="CHEBI:15377"/>
        <dbReference type="ChEBI" id="CHEBI:15378"/>
        <dbReference type="ChEBI" id="CHEBI:17790"/>
        <dbReference type="ChEBI" id="CHEBI:29973"/>
        <dbReference type="ChEBI" id="CHEBI:82795"/>
        <dbReference type="EC" id="3.1.1.61"/>
    </reaction>
</comment>
<comment type="catalytic activity">
    <reaction evidence="1">
        <text>L-glutaminyl-[protein] + H2O = L-glutamyl-[protein] + NH4(+)</text>
        <dbReference type="Rhea" id="RHEA:16441"/>
        <dbReference type="Rhea" id="RHEA-COMP:10207"/>
        <dbReference type="Rhea" id="RHEA-COMP:10208"/>
        <dbReference type="ChEBI" id="CHEBI:15377"/>
        <dbReference type="ChEBI" id="CHEBI:28938"/>
        <dbReference type="ChEBI" id="CHEBI:29973"/>
        <dbReference type="ChEBI" id="CHEBI:30011"/>
        <dbReference type="EC" id="3.5.1.44"/>
    </reaction>
</comment>
<comment type="subcellular location">
    <subcellularLocation>
        <location evidence="1">Cytoplasm</location>
    </subcellularLocation>
</comment>
<comment type="domain">
    <text evidence="1">Contains a C-terminal catalytic domain, and an N-terminal region which modulates catalytic activity.</text>
</comment>
<comment type="PTM">
    <text evidence="1">Phosphorylated by CheA. Phosphorylation of the N-terminal regulatory domain activates the methylesterase activity.</text>
</comment>
<comment type="similarity">
    <text evidence="1">Belongs to the CheB family.</text>
</comment>
<keyword id="KW-0145">Chemotaxis</keyword>
<keyword id="KW-0963">Cytoplasm</keyword>
<keyword id="KW-0378">Hydrolase</keyword>
<keyword id="KW-0597">Phosphoprotein</keyword>
<gene>
    <name evidence="1" type="primary">cheB</name>
    <name type="ordered locus">BB2550</name>
</gene>
<evidence type="ECO:0000255" key="1">
    <source>
        <dbReference type="HAMAP-Rule" id="MF_00099"/>
    </source>
</evidence>
<protein>
    <recommendedName>
        <fullName evidence="1">Protein-glutamate methylesterase/protein-glutamine glutaminase</fullName>
        <ecNumber evidence="1">3.1.1.61</ecNumber>
        <ecNumber evidence="1">3.5.1.44</ecNumber>
    </recommendedName>
</protein>
<feature type="chain" id="PRO_0000157978" description="Protein-glutamate methylesterase/protein-glutamine glutaminase">
    <location>
        <begin position="1"/>
        <end position="350"/>
    </location>
</feature>
<feature type="domain" description="Response regulatory" evidence="1">
    <location>
        <begin position="5"/>
        <end position="122"/>
    </location>
</feature>
<feature type="domain" description="CheB-type methylesterase" evidence="1">
    <location>
        <begin position="152"/>
        <end position="346"/>
    </location>
</feature>
<feature type="active site" evidence="1">
    <location>
        <position position="165"/>
    </location>
</feature>
<feature type="active site" evidence="1">
    <location>
        <position position="191"/>
    </location>
</feature>
<feature type="active site" evidence="1">
    <location>
        <position position="288"/>
    </location>
</feature>
<feature type="modified residue" description="4-aspartylphosphate" evidence="1">
    <location>
        <position position="56"/>
    </location>
</feature>
<name>CHEB_BORBR</name>
<accession>Q7WJE7</accession>
<sequence length="350" mass="37307">MKKIKVLCVDDSALVRGLMTEIINSHPDMEVVATAPDPLVARELIKKHNPDVLTLDVEMPRMDGLDFLEKLMRLRPMPVVMVSSLTERGGEITLRALELGAIDFVTKPKLGIRDGLIEYSEVIADKIRAASRARLRAPAPAGHAAPLRLRSPFASSEKLVIVGASTGGTEAIREVLQPLPADSPAILITQHMPAGFTRSFAQRLDALCAVTVREASDGERVLPGHVYLAPGGETHMRLGRSGANYVIGLQASEPVNRHRPSVDVLFHSAAEAAGGNAIGVILTGMGKDGAAGLLAMKRAGARTMAQDEASCVVFGMPREAIALGAADEVVPLADISERILTRLGDRGHRV</sequence>
<organism>
    <name type="scientific">Bordetella bronchiseptica (strain ATCC BAA-588 / NCTC 13252 / RB50)</name>
    <name type="common">Alcaligenes bronchisepticus</name>
    <dbReference type="NCBI Taxonomy" id="257310"/>
    <lineage>
        <taxon>Bacteria</taxon>
        <taxon>Pseudomonadati</taxon>
        <taxon>Pseudomonadota</taxon>
        <taxon>Betaproteobacteria</taxon>
        <taxon>Burkholderiales</taxon>
        <taxon>Alcaligenaceae</taxon>
        <taxon>Bordetella</taxon>
    </lineage>
</organism>